<reference key="1">
    <citation type="journal article" date="1993" name="Proc. Natl. Acad. Sci. U.S.A.">
        <title>The Arabidopsis endoplasmic reticulum retention receptor functions in yeast.</title>
        <authorList>
            <person name="Lee H.I."/>
            <person name="Gal S."/>
            <person name="Newman T.C."/>
            <person name="Raikhel N.V."/>
        </authorList>
    </citation>
    <scope>NUCLEOTIDE SEQUENCE [MRNA]</scope>
    <source>
        <strain>cv. Columbia</strain>
    </source>
</reference>
<reference key="2">
    <citation type="journal article" date="2000" name="Nature">
        <title>Sequence and analysis of chromosome 1 of the plant Arabidopsis thaliana.</title>
        <authorList>
            <person name="Theologis A."/>
            <person name="Ecker J.R."/>
            <person name="Palm C.J."/>
            <person name="Federspiel N.A."/>
            <person name="Kaul S."/>
            <person name="White O."/>
            <person name="Alonso J."/>
            <person name="Altafi H."/>
            <person name="Araujo R."/>
            <person name="Bowman C.L."/>
            <person name="Brooks S.Y."/>
            <person name="Buehler E."/>
            <person name="Chan A."/>
            <person name="Chao Q."/>
            <person name="Chen H."/>
            <person name="Cheuk R.F."/>
            <person name="Chin C.W."/>
            <person name="Chung M.K."/>
            <person name="Conn L."/>
            <person name="Conway A.B."/>
            <person name="Conway A.R."/>
            <person name="Creasy T.H."/>
            <person name="Dewar K."/>
            <person name="Dunn P."/>
            <person name="Etgu P."/>
            <person name="Feldblyum T.V."/>
            <person name="Feng J.-D."/>
            <person name="Fong B."/>
            <person name="Fujii C.Y."/>
            <person name="Gill J.E."/>
            <person name="Goldsmith A.D."/>
            <person name="Haas B."/>
            <person name="Hansen N.F."/>
            <person name="Hughes B."/>
            <person name="Huizar L."/>
            <person name="Hunter J.L."/>
            <person name="Jenkins J."/>
            <person name="Johnson-Hopson C."/>
            <person name="Khan S."/>
            <person name="Khaykin E."/>
            <person name="Kim C.J."/>
            <person name="Koo H.L."/>
            <person name="Kremenetskaia I."/>
            <person name="Kurtz D.B."/>
            <person name="Kwan A."/>
            <person name="Lam B."/>
            <person name="Langin-Hooper S."/>
            <person name="Lee A."/>
            <person name="Lee J.M."/>
            <person name="Lenz C.A."/>
            <person name="Li J.H."/>
            <person name="Li Y.-P."/>
            <person name="Lin X."/>
            <person name="Liu S.X."/>
            <person name="Liu Z.A."/>
            <person name="Luros J.S."/>
            <person name="Maiti R."/>
            <person name="Marziali A."/>
            <person name="Militscher J."/>
            <person name="Miranda M."/>
            <person name="Nguyen M."/>
            <person name="Nierman W.C."/>
            <person name="Osborne B.I."/>
            <person name="Pai G."/>
            <person name="Peterson J."/>
            <person name="Pham P.K."/>
            <person name="Rizzo M."/>
            <person name="Rooney T."/>
            <person name="Rowley D."/>
            <person name="Sakano H."/>
            <person name="Salzberg S.L."/>
            <person name="Schwartz J.R."/>
            <person name="Shinn P."/>
            <person name="Southwick A.M."/>
            <person name="Sun H."/>
            <person name="Tallon L.J."/>
            <person name="Tambunga G."/>
            <person name="Toriumi M.J."/>
            <person name="Town C.D."/>
            <person name="Utterback T."/>
            <person name="Van Aken S."/>
            <person name="Vaysberg M."/>
            <person name="Vysotskaia V.S."/>
            <person name="Walker M."/>
            <person name="Wu D."/>
            <person name="Yu G."/>
            <person name="Fraser C.M."/>
            <person name="Venter J.C."/>
            <person name="Davis R.W."/>
        </authorList>
    </citation>
    <scope>NUCLEOTIDE SEQUENCE [LARGE SCALE GENOMIC DNA]</scope>
    <source>
        <strain>cv. Columbia</strain>
    </source>
</reference>
<reference key="3">
    <citation type="journal article" date="2017" name="Plant J.">
        <title>Araport11: a complete reannotation of the Arabidopsis thaliana reference genome.</title>
        <authorList>
            <person name="Cheng C.Y."/>
            <person name="Krishnakumar V."/>
            <person name="Chan A.P."/>
            <person name="Thibaud-Nissen F."/>
            <person name="Schobel S."/>
            <person name="Town C.D."/>
        </authorList>
    </citation>
    <scope>GENOME REANNOTATION</scope>
    <source>
        <strain>cv. Columbia</strain>
    </source>
</reference>
<reference key="4">
    <citation type="journal article" date="2003" name="Science">
        <title>Empirical analysis of transcriptional activity in the Arabidopsis genome.</title>
        <authorList>
            <person name="Yamada K."/>
            <person name="Lim J."/>
            <person name="Dale J.M."/>
            <person name="Chen H."/>
            <person name="Shinn P."/>
            <person name="Palm C.J."/>
            <person name="Southwick A.M."/>
            <person name="Wu H.C."/>
            <person name="Kim C.J."/>
            <person name="Nguyen M."/>
            <person name="Pham P.K."/>
            <person name="Cheuk R.F."/>
            <person name="Karlin-Newmann G."/>
            <person name="Liu S.X."/>
            <person name="Lam B."/>
            <person name="Sakano H."/>
            <person name="Wu T."/>
            <person name="Yu G."/>
            <person name="Miranda M."/>
            <person name="Quach H.L."/>
            <person name="Tripp M."/>
            <person name="Chang C.H."/>
            <person name="Lee J.M."/>
            <person name="Toriumi M.J."/>
            <person name="Chan M.M."/>
            <person name="Tang C.C."/>
            <person name="Onodera C.S."/>
            <person name="Deng J.M."/>
            <person name="Akiyama K."/>
            <person name="Ansari Y."/>
            <person name="Arakawa T."/>
            <person name="Banh J."/>
            <person name="Banno F."/>
            <person name="Bowser L."/>
            <person name="Brooks S.Y."/>
            <person name="Carninci P."/>
            <person name="Chao Q."/>
            <person name="Choy N."/>
            <person name="Enju A."/>
            <person name="Goldsmith A.D."/>
            <person name="Gurjal M."/>
            <person name="Hansen N.F."/>
            <person name="Hayashizaki Y."/>
            <person name="Johnson-Hopson C."/>
            <person name="Hsuan V.W."/>
            <person name="Iida K."/>
            <person name="Karnes M."/>
            <person name="Khan S."/>
            <person name="Koesema E."/>
            <person name="Ishida J."/>
            <person name="Jiang P.X."/>
            <person name="Jones T."/>
            <person name="Kawai J."/>
            <person name="Kamiya A."/>
            <person name="Meyers C."/>
            <person name="Nakajima M."/>
            <person name="Narusaka M."/>
            <person name="Seki M."/>
            <person name="Sakurai T."/>
            <person name="Satou M."/>
            <person name="Tamse R."/>
            <person name="Vaysberg M."/>
            <person name="Wallender E.K."/>
            <person name="Wong C."/>
            <person name="Yamamura Y."/>
            <person name="Yuan S."/>
            <person name="Shinozaki K."/>
            <person name="Davis R.W."/>
            <person name="Theologis A."/>
            <person name="Ecker J.R."/>
        </authorList>
    </citation>
    <scope>NUCLEOTIDE SEQUENCE [LARGE SCALE MRNA]</scope>
    <source>
        <strain>cv. Columbia</strain>
    </source>
</reference>
<protein>
    <recommendedName>
        <fullName>ER lumen protein-retaining receptor A</fullName>
    </recommendedName>
    <alternativeName>
        <fullName>HDEL receptor</fullName>
    </alternativeName>
</protein>
<comment type="function">
    <text>Required for the retention of luminal endoplasmic reticulum proteins. Determines the specificity of the luminal ER protein retention system. Also required for normal vesicular traffic through the Golgi. This receptor recognizes H-D-E-L.</text>
</comment>
<comment type="subcellular location">
    <subcellularLocation>
        <location>Endoplasmic reticulum membrane</location>
        <topology>Multi-pass membrane protein</topology>
    </subcellularLocation>
</comment>
<comment type="similarity">
    <text evidence="2">Belongs to the ERD2 family.</text>
</comment>
<gene>
    <name type="primary">ERD2A</name>
    <name type="ordered locus">At1g29330</name>
    <name type="ORF">F15D2.26</name>
    <name type="ORF">F28N24.1</name>
</gene>
<sequence>MNIFRFAGDMSHLISVLILLLKIYATKSCAGISLKTQELYALVFLTRYLDLFTDYVSLYNSIMKIVFIASSLAIVWCMRRHPLVRRSYDKDLDTFRHQYVVLACFVLGLILNEKFTVQEVFWAFSIYLEAVAILPQLVLLQRSGNVDNLTGQYVVFLGAYRGLYIINWIYRYFTEDHFTRWIACVSGLVQTALYADFFYYYYISWKTNTKLKLPA</sequence>
<keyword id="KW-0256">Endoplasmic reticulum</keyword>
<keyword id="KW-0931">ER-Golgi transport</keyword>
<keyword id="KW-0472">Membrane</keyword>
<keyword id="KW-0653">Protein transport</keyword>
<keyword id="KW-0675">Receptor</keyword>
<keyword id="KW-1185">Reference proteome</keyword>
<keyword id="KW-0812">Transmembrane</keyword>
<keyword id="KW-1133">Transmembrane helix</keyword>
<keyword id="KW-0813">Transport</keyword>
<feature type="chain" id="PRO_0000194167" description="ER lumen protein-retaining receptor A">
    <location>
        <begin position="1"/>
        <end position="215"/>
    </location>
</feature>
<feature type="topological domain" description="Lumenal" evidence="1">
    <location>
        <begin position="1"/>
        <end position="2"/>
    </location>
</feature>
<feature type="transmembrane region" description="Helical" evidence="1">
    <location>
        <begin position="3"/>
        <end position="21"/>
    </location>
</feature>
<feature type="topological domain" description="Cytoplasmic" evidence="1">
    <location>
        <begin position="22"/>
        <end position="35"/>
    </location>
</feature>
<feature type="transmembrane region" description="Helical" evidence="1">
    <location>
        <begin position="36"/>
        <end position="53"/>
    </location>
</feature>
<feature type="topological domain" description="Lumenal" evidence="1">
    <location>
        <begin position="54"/>
        <end position="61"/>
    </location>
</feature>
<feature type="transmembrane region" description="Helical" evidence="1">
    <location>
        <begin position="62"/>
        <end position="82"/>
    </location>
</feature>
<feature type="topological domain" description="Cytoplasmic" evidence="1">
    <location>
        <begin position="83"/>
        <end position="98"/>
    </location>
</feature>
<feature type="transmembrane region" description="Helical" evidence="1">
    <location>
        <begin position="99"/>
        <end position="112"/>
    </location>
</feature>
<feature type="topological domain" description="Lumenal" evidence="1">
    <location>
        <begin position="113"/>
        <end position="119"/>
    </location>
</feature>
<feature type="transmembrane region" description="Helical" evidence="1">
    <location>
        <begin position="120"/>
        <end position="139"/>
    </location>
</feature>
<feature type="topological domain" description="Cytoplasmic" evidence="1">
    <location>
        <begin position="140"/>
        <end position="151"/>
    </location>
</feature>
<feature type="transmembrane region" description="Helical" evidence="1">
    <location>
        <begin position="152"/>
        <end position="170"/>
    </location>
</feature>
<feature type="topological domain" description="Lumenal" evidence="1">
    <location>
        <begin position="171"/>
        <end position="181"/>
    </location>
</feature>
<feature type="transmembrane region" description="Helical" evidence="1">
    <location>
        <begin position="182"/>
        <end position="202"/>
    </location>
</feature>
<feature type="topological domain" description="Cytoplasmic" evidence="1">
    <location>
        <begin position="203"/>
        <end position="215"/>
    </location>
</feature>
<organism>
    <name type="scientific">Arabidopsis thaliana</name>
    <name type="common">Mouse-ear cress</name>
    <dbReference type="NCBI Taxonomy" id="3702"/>
    <lineage>
        <taxon>Eukaryota</taxon>
        <taxon>Viridiplantae</taxon>
        <taxon>Streptophyta</taxon>
        <taxon>Embryophyta</taxon>
        <taxon>Tracheophyta</taxon>
        <taxon>Spermatophyta</taxon>
        <taxon>Magnoliopsida</taxon>
        <taxon>eudicotyledons</taxon>
        <taxon>Gunneridae</taxon>
        <taxon>Pentapetalae</taxon>
        <taxon>rosids</taxon>
        <taxon>malvids</taxon>
        <taxon>Brassicales</taxon>
        <taxon>Brassicaceae</taxon>
        <taxon>Camelineae</taxon>
        <taxon>Arabidopsis</taxon>
    </lineage>
</organism>
<dbReference type="EMBL" id="L23573">
    <property type="status" value="NOT_ANNOTATED_CDS"/>
    <property type="molecule type" value="mRNA"/>
</dbReference>
<dbReference type="EMBL" id="AC021043">
    <property type="protein sequence ID" value="AAF88108.1"/>
    <property type="molecule type" value="Genomic_DNA"/>
</dbReference>
<dbReference type="EMBL" id="AC068667">
    <property type="protein sequence ID" value="AAG51724.1"/>
    <property type="molecule type" value="Genomic_DNA"/>
</dbReference>
<dbReference type="EMBL" id="CP002684">
    <property type="protein sequence ID" value="AEE31073.1"/>
    <property type="molecule type" value="Genomic_DNA"/>
</dbReference>
<dbReference type="EMBL" id="AY093240">
    <property type="protein sequence ID" value="AAM13239.1"/>
    <property type="molecule type" value="mRNA"/>
</dbReference>
<dbReference type="EMBL" id="BT009655">
    <property type="protein sequence ID" value="AAP75805.1"/>
    <property type="molecule type" value="mRNA"/>
</dbReference>
<dbReference type="PIR" id="A49677">
    <property type="entry name" value="A49677"/>
</dbReference>
<dbReference type="SMR" id="P35402"/>
<dbReference type="BioGRID" id="25042">
    <property type="interactions" value="34"/>
</dbReference>
<dbReference type="FunCoup" id="P35402">
    <property type="interactions" value="2701"/>
</dbReference>
<dbReference type="IntAct" id="P35402">
    <property type="interactions" value="29"/>
</dbReference>
<dbReference type="STRING" id="3702.P35402"/>
<dbReference type="PaxDb" id="3702-AT1G29330.1"/>
<dbReference type="ProteomicsDB" id="220667"/>
<dbReference type="EnsemblPlants" id="AT1G29330.1">
    <property type="protein sequence ID" value="AT1G29330.1"/>
    <property type="gene ID" value="AT1G29330"/>
</dbReference>
<dbReference type="GeneID" id="839807"/>
<dbReference type="Gramene" id="AT1G29330.1">
    <property type="protein sequence ID" value="AT1G29330.1"/>
    <property type="gene ID" value="AT1G29330"/>
</dbReference>
<dbReference type="KEGG" id="ath:AT1G29330"/>
<dbReference type="Araport" id="AT1G29330"/>
<dbReference type="TAIR" id="AT1G29330">
    <property type="gene designation" value="ERD2"/>
</dbReference>
<dbReference type="eggNOG" id="KOG3106">
    <property type="taxonomic scope" value="Eukaryota"/>
</dbReference>
<dbReference type="HOGENOM" id="CLU_057784_0_0_1"/>
<dbReference type="InParanoid" id="P35402"/>
<dbReference type="OMA" id="QEVLWAF"/>
<dbReference type="OrthoDB" id="7694678at2759"/>
<dbReference type="PhylomeDB" id="P35402"/>
<dbReference type="PRO" id="PR:P35402"/>
<dbReference type="Proteomes" id="UP000006548">
    <property type="component" value="Chromosome 1"/>
</dbReference>
<dbReference type="ExpressionAtlas" id="P35402">
    <property type="expression patterns" value="baseline and differential"/>
</dbReference>
<dbReference type="GO" id="GO:0005801">
    <property type="term" value="C:cis-Golgi network"/>
    <property type="evidence" value="ECO:0000314"/>
    <property type="project" value="TAIR"/>
</dbReference>
<dbReference type="GO" id="GO:0005783">
    <property type="term" value="C:endoplasmic reticulum"/>
    <property type="evidence" value="ECO:0000314"/>
    <property type="project" value="TAIR"/>
</dbReference>
<dbReference type="GO" id="GO:0005789">
    <property type="term" value="C:endoplasmic reticulum membrane"/>
    <property type="evidence" value="ECO:0007669"/>
    <property type="project" value="UniProtKB-SubCell"/>
</dbReference>
<dbReference type="GO" id="GO:0005794">
    <property type="term" value="C:Golgi apparatus"/>
    <property type="evidence" value="ECO:0000314"/>
    <property type="project" value="TAIR"/>
</dbReference>
<dbReference type="GO" id="GO:0046923">
    <property type="term" value="F:ER retention sequence binding"/>
    <property type="evidence" value="ECO:0007669"/>
    <property type="project" value="InterPro"/>
</dbReference>
<dbReference type="GO" id="GO:0006621">
    <property type="term" value="P:protein retention in ER lumen"/>
    <property type="evidence" value="ECO:0007669"/>
    <property type="project" value="InterPro"/>
</dbReference>
<dbReference type="GO" id="GO:0015031">
    <property type="term" value="P:protein transport"/>
    <property type="evidence" value="ECO:0007669"/>
    <property type="project" value="UniProtKB-KW"/>
</dbReference>
<dbReference type="GO" id="GO:0016192">
    <property type="term" value="P:vesicle-mediated transport"/>
    <property type="evidence" value="ECO:0007669"/>
    <property type="project" value="UniProtKB-KW"/>
</dbReference>
<dbReference type="InterPro" id="IPR000133">
    <property type="entry name" value="ER_ret_rcpt"/>
</dbReference>
<dbReference type="PANTHER" id="PTHR10585">
    <property type="entry name" value="ER LUMEN PROTEIN RETAINING RECEPTOR"/>
    <property type="match status" value="1"/>
</dbReference>
<dbReference type="Pfam" id="PF00810">
    <property type="entry name" value="ER_lumen_recept"/>
    <property type="match status" value="1"/>
</dbReference>
<dbReference type="PRINTS" id="PR00660">
    <property type="entry name" value="ERLUMENR"/>
</dbReference>
<dbReference type="PROSITE" id="PS00951">
    <property type="entry name" value="ER_LUMEN_RECEPTOR_1"/>
    <property type="match status" value="1"/>
</dbReference>
<dbReference type="PROSITE" id="PS00952">
    <property type="entry name" value="ER_LUMEN_RECEPTOR_2"/>
    <property type="match status" value="1"/>
</dbReference>
<evidence type="ECO:0000255" key="1"/>
<evidence type="ECO:0000305" key="2"/>
<proteinExistence type="evidence at transcript level"/>
<name>ERD2A_ARATH</name>
<accession>P35402</accession>